<name>DPS_SALA4</name>
<organism>
    <name type="scientific">Salmonella agona (strain SL483)</name>
    <dbReference type="NCBI Taxonomy" id="454166"/>
    <lineage>
        <taxon>Bacteria</taxon>
        <taxon>Pseudomonadati</taxon>
        <taxon>Pseudomonadota</taxon>
        <taxon>Gammaproteobacteria</taxon>
        <taxon>Enterobacterales</taxon>
        <taxon>Enterobacteriaceae</taxon>
        <taxon>Salmonella</taxon>
    </lineage>
</organism>
<accession>B5F0B0</accession>
<reference key="1">
    <citation type="journal article" date="2011" name="J. Bacteriol.">
        <title>Comparative genomics of 28 Salmonella enterica isolates: evidence for CRISPR-mediated adaptive sublineage evolution.</title>
        <authorList>
            <person name="Fricke W.F."/>
            <person name="Mammel M.K."/>
            <person name="McDermott P.F."/>
            <person name="Tartera C."/>
            <person name="White D.G."/>
            <person name="Leclerc J.E."/>
            <person name="Ravel J."/>
            <person name="Cebula T.A."/>
        </authorList>
    </citation>
    <scope>NUCLEOTIDE SEQUENCE [LARGE SCALE GENOMIC DNA]</scope>
    <source>
        <strain>SL483</strain>
    </source>
</reference>
<dbReference type="EC" id="1.16.-.-" evidence="1"/>
<dbReference type="EMBL" id="CP001138">
    <property type="protein sequence ID" value="ACH52931.1"/>
    <property type="molecule type" value="Genomic_DNA"/>
</dbReference>
<dbReference type="RefSeq" id="WP_000100805.1">
    <property type="nucleotide sequence ID" value="NC_011149.1"/>
</dbReference>
<dbReference type="SMR" id="B5F0B0"/>
<dbReference type="KEGG" id="sea:SeAg_B0868"/>
<dbReference type="HOGENOM" id="CLU_098183_1_2_6"/>
<dbReference type="Proteomes" id="UP000008819">
    <property type="component" value="Chromosome"/>
</dbReference>
<dbReference type="GO" id="GO:0005737">
    <property type="term" value="C:cytoplasm"/>
    <property type="evidence" value="ECO:0007669"/>
    <property type="project" value="UniProtKB-SubCell"/>
</dbReference>
<dbReference type="GO" id="GO:0003677">
    <property type="term" value="F:DNA binding"/>
    <property type="evidence" value="ECO:0007669"/>
    <property type="project" value="UniProtKB-UniRule"/>
</dbReference>
<dbReference type="GO" id="GO:0008199">
    <property type="term" value="F:ferric iron binding"/>
    <property type="evidence" value="ECO:0007669"/>
    <property type="project" value="UniProtKB-UniRule"/>
</dbReference>
<dbReference type="GO" id="GO:0016722">
    <property type="term" value="F:oxidoreductase activity, acting on metal ions"/>
    <property type="evidence" value="ECO:0007669"/>
    <property type="project" value="InterPro"/>
</dbReference>
<dbReference type="GO" id="GO:0030261">
    <property type="term" value="P:chromosome condensation"/>
    <property type="evidence" value="ECO:0007669"/>
    <property type="project" value="UniProtKB-KW"/>
</dbReference>
<dbReference type="GO" id="GO:0006879">
    <property type="term" value="P:intracellular iron ion homeostasis"/>
    <property type="evidence" value="ECO:0007669"/>
    <property type="project" value="UniProtKB-KW"/>
</dbReference>
<dbReference type="CDD" id="cd01043">
    <property type="entry name" value="DPS"/>
    <property type="match status" value="1"/>
</dbReference>
<dbReference type="FunFam" id="1.20.1260.10:FF:000003">
    <property type="entry name" value="DNA protection during starvation protein"/>
    <property type="match status" value="1"/>
</dbReference>
<dbReference type="Gene3D" id="1.20.1260.10">
    <property type="match status" value="1"/>
</dbReference>
<dbReference type="HAMAP" id="MF_01441">
    <property type="entry name" value="Dps"/>
    <property type="match status" value="1"/>
</dbReference>
<dbReference type="InterPro" id="IPR002177">
    <property type="entry name" value="DPS_DNA-bd"/>
</dbReference>
<dbReference type="InterPro" id="IPR023188">
    <property type="entry name" value="DPS_DNA-bd_CS"/>
</dbReference>
<dbReference type="InterPro" id="IPR023067">
    <property type="entry name" value="Dps_gammaproteobac"/>
</dbReference>
<dbReference type="InterPro" id="IPR012347">
    <property type="entry name" value="Ferritin-like"/>
</dbReference>
<dbReference type="InterPro" id="IPR009078">
    <property type="entry name" value="Ferritin-like_SF"/>
</dbReference>
<dbReference type="InterPro" id="IPR008331">
    <property type="entry name" value="Ferritin_DPS_dom"/>
</dbReference>
<dbReference type="NCBIfam" id="NF006975">
    <property type="entry name" value="PRK09448.1"/>
    <property type="match status" value="1"/>
</dbReference>
<dbReference type="PANTHER" id="PTHR42932:SF3">
    <property type="entry name" value="DNA PROTECTION DURING STARVATION PROTEIN"/>
    <property type="match status" value="1"/>
</dbReference>
<dbReference type="PANTHER" id="PTHR42932">
    <property type="entry name" value="GENERAL STRESS PROTEIN 20U"/>
    <property type="match status" value="1"/>
</dbReference>
<dbReference type="Pfam" id="PF00210">
    <property type="entry name" value="Ferritin"/>
    <property type="match status" value="1"/>
</dbReference>
<dbReference type="PIRSF" id="PIRSF005900">
    <property type="entry name" value="Dps"/>
    <property type="match status" value="1"/>
</dbReference>
<dbReference type="PRINTS" id="PR01346">
    <property type="entry name" value="HELNAPAPROT"/>
</dbReference>
<dbReference type="SUPFAM" id="SSF47240">
    <property type="entry name" value="Ferritin-like"/>
    <property type="match status" value="1"/>
</dbReference>
<dbReference type="PROSITE" id="PS00818">
    <property type="entry name" value="DPS_1"/>
    <property type="match status" value="1"/>
</dbReference>
<dbReference type="PROSITE" id="PS00819">
    <property type="entry name" value="DPS_2"/>
    <property type="match status" value="1"/>
</dbReference>
<proteinExistence type="inferred from homology"/>
<gene>
    <name evidence="1" type="primary">dps</name>
    <name type="ordered locus">SeAg_B0868</name>
</gene>
<sequence length="167" mass="18717">MSTAKLVKTKASNLLYTRNDVSESDKKATVELLNRQVIQFIDLSLITKQAHWNMRGANFIAVHEMLDGFRTALTDHLDTMAERAVQLGGVALGTTQVINSKTPLKSYPLDIHNVQDHLKELADRYAVVANDVRKAIGEAKDEDTADIFTAASRDLDKFLWFIESNIE</sequence>
<evidence type="ECO:0000255" key="1">
    <source>
        <dbReference type="HAMAP-Rule" id="MF_01441"/>
    </source>
</evidence>
<feature type="chain" id="PRO_1000145909" description="DNA protection during starvation protein">
    <location>
        <begin position="1"/>
        <end position="167"/>
    </location>
</feature>
<feature type="binding site" evidence="1">
    <location>
        <position position="51"/>
    </location>
    <ligand>
        <name>Fe cation</name>
        <dbReference type="ChEBI" id="CHEBI:24875"/>
    </ligand>
</feature>
<feature type="binding site" evidence="1">
    <location>
        <position position="78"/>
    </location>
    <ligand>
        <name>Fe cation</name>
        <dbReference type="ChEBI" id="CHEBI:24875"/>
    </ligand>
</feature>
<feature type="binding site" evidence="1">
    <location>
        <position position="82"/>
    </location>
    <ligand>
        <name>Fe cation</name>
        <dbReference type="ChEBI" id="CHEBI:24875"/>
    </ligand>
</feature>
<protein>
    <recommendedName>
        <fullName evidence="1">DNA protection during starvation protein</fullName>
        <ecNumber evidence="1">1.16.-.-</ecNumber>
    </recommendedName>
</protein>
<comment type="function">
    <text evidence="1">During stationary phase, binds the chromosome non-specifically, forming a highly ordered and stable dps-DNA co-crystal within which chromosomal DNA is condensed and protected from diverse damages. It protects DNA from oxidative damage by sequestering intracellular Fe(2+) ion and storing it in the form of Fe(3+) oxyhydroxide mineral, which can be released after reduction. One hydrogen peroxide oxidizes two Fe(2+) ions, which prevents hydroxyl radical production by the Fenton reaction.</text>
</comment>
<comment type="catalytic activity">
    <reaction evidence="1">
        <text>2 Fe(2+) + H2O2 + 2 H(+) = 2 Fe(3+) + 2 H2O</text>
        <dbReference type="Rhea" id="RHEA:48712"/>
        <dbReference type="ChEBI" id="CHEBI:15377"/>
        <dbReference type="ChEBI" id="CHEBI:15378"/>
        <dbReference type="ChEBI" id="CHEBI:16240"/>
        <dbReference type="ChEBI" id="CHEBI:29033"/>
        <dbReference type="ChEBI" id="CHEBI:29034"/>
    </reaction>
</comment>
<comment type="subunit">
    <text evidence="1">Homododecamer. The 12 subunits form a hollow sphere into which the mineral iron core of up to 500 Fe(3+) can be deposited.</text>
</comment>
<comment type="subcellular location">
    <subcellularLocation>
        <location evidence="1">Cytoplasm</location>
    </subcellularLocation>
</comment>
<comment type="similarity">
    <text evidence="1">Belongs to the Dps family.</text>
</comment>
<keyword id="KW-0963">Cytoplasm</keyword>
<keyword id="KW-0226">DNA condensation</keyword>
<keyword id="KW-0238">DNA-binding</keyword>
<keyword id="KW-0408">Iron</keyword>
<keyword id="KW-0409">Iron storage</keyword>
<keyword id="KW-0479">Metal-binding</keyword>
<keyword id="KW-0560">Oxidoreductase</keyword>